<sequence>MPIEFIATSKLPTAFGEFNISVFQDPVTGEEHVALSKGLENPPTGPVLVRVHSECLTGDAFASLKCDCGPQLQATQKLINEAGQGVILYLRQEGRGIGLTNKIRAYALQDQGHDTVDANLLLNLPADARRYDMCSIMLDHLKVKEVKLITNNPLKIQALKDQGINVVDRVPLTVGRNPFNEQYLKTKRERMDHLYQKDDF</sequence>
<accession>B7GVX4</accession>
<dbReference type="EC" id="3.5.4.25" evidence="1"/>
<dbReference type="EMBL" id="CP001172">
    <property type="protein sequence ID" value="ACJ58149.1"/>
    <property type="molecule type" value="Genomic_DNA"/>
</dbReference>
<dbReference type="RefSeq" id="WP_001121174.1">
    <property type="nucleotide sequence ID" value="NZ_CP001172.1"/>
</dbReference>
<dbReference type="SMR" id="B7GVX4"/>
<dbReference type="HOGENOM" id="CLU_020273_2_1_6"/>
<dbReference type="UniPathway" id="UPA00275">
    <property type="reaction ID" value="UER00400"/>
</dbReference>
<dbReference type="Proteomes" id="UP000006924">
    <property type="component" value="Chromosome"/>
</dbReference>
<dbReference type="GO" id="GO:0005829">
    <property type="term" value="C:cytosol"/>
    <property type="evidence" value="ECO:0007669"/>
    <property type="project" value="TreeGrafter"/>
</dbReference>
<dbReference type="GO" id="GO:0005525">
    <property type="term" value="F:GTP binding"/>
    <property type="evidence" value="ECO:0007669"/>
    <property type="project" value="UniProtKB-KW"/>
</dbReference>
<dbReference type="GO" id="GO:0003935">
    <property type="term" value="F:GTP cyclohydrolase II activity"/>
    <property type="evidence" value="ECO:0007669"/>
    <property type="project" value="UniProtKB-UniRule"/>
</dbReference>
<dbReference type="GO" id="GO:0008270">
    <property type="term" value="F:zinc ion binding"/>
    <property type="evidence" value="ECO:0007669"/>
    <property type="project" value="UniProtKB-UniRule"/>
</dbReference>
<dbReference type="GO" id="GO:0009231">
    <property type="term" value="P:riboflavin biosynthetic process"/>
    <property type="evidence" value="ECO:0007669"/>
    <property type="project" value="UniProtKB-UniRule"/>
</dbReference>
<dbReference type="CDD" id="cd00641">
    <property type="entry name" value="GTP_cyclohydro2"/>
    <property type="match status" value="1"/>
</dbReference>
<dbReference type="FunFam" id="3.40.50.10990:FF:000002">
    <property type="entry name" value="GTP cyclohydrolase-2"/>
    <property type="match status" value="1"/>
</dbReference>
<dbReference type="Gene3D" id="3.40.50.10990">
    <property type="entry name" value="GTP cyclohydrolase II"/>
    <property type="match status" value="1"/>
</dbReference>
<dbReference type="HAMAP" id="MF_00179">
    <property type="entry name" value="RibA"/>
    <property type="match status" value="1"/>
</dbReference>
<dbReference type="InterPro" id="IPR032677">
    <property type="entry name" value="GTP_cyclohydro_II"/>
</dbReference>
<dbReference type="InterPro" id="IPR000926">
    <property type="entry name" value="RibA"/>
</dbReference>
<dbReference type="InterPro" id="IPR036144">
    <property type="entry name" value="RibA-like_sf"/>
</dbReference>
<dbReference type="NCBIfam" id="NF001591">
    <property type="entry name" value="PRK00393.1"/>
    <property type="match status" value="1"/>
</dbReference>
<dbReference type="NCBIfam" id="TIGR00505">
    <property type="entry name" value="ribA"/>
    <property type="match status" value="1"/>
</dbReference>
<dbReference type="PANTHER" id="PTHR21327:SF18">
    <property type="entry name" value="3,4-DIHYDROXY-2-BUTANONE 4-PHOSPHATE SYNTHASE"/>
    <property type="match status" value="1"/>
</dbReference>
<dbReference type="PANTHER" id="PTHR21327">
    <property type="entry name" value="GTP CYCLOHYDROLASE II-RELATED"/>
    <property type="match status" value="1"/>
</dbReference>
<dbReference type="Pfam" id="PF00925">
    <property type="entry name" value="GTP_cyclohydro2"/>
    <property type="match status" value="1"/>
</dbReference>
<dbReference type="SUPFAM" id="SSF142695">
    <property type="entry name" value="RibA-like"/>
    <property type="match status" value="1"/>
</dbReference>
<keyword id="KW-0342">GTP-binding</keyword>
<keyword id="KW-0378">Hydrolase</keyword>
<keyword id="KW-0479">Metal-binding</keyword>
<keyword id="KW-0547">Nucleotide-binding</keyword>
<keyword id="KW-0686">Riboflavin biosynthesis</keyword>
<keyword id="KW-0862">Zinc</keyword>
<proteinExistence type="inferred from homology"/>
<reference key="1">
    <citation type="journal article" date="2008" name="J. Bacteriol.">
        <title>Comparative genome sequence analysis of multidrug-resistant Acinetobacter baumannii.</title>
        <authorList>
            <person name="Adams M.D."/>
            <person name="Goglin K."/>
            <person name="Molyneaux N."/>
            <person name="Hujer K.M."/>
            <person name="Lavender H."/>
            <person name="Jamison J.J."/>
            <person name="MacDonald I.J."/>
            <person name="Martin K.M."/>
            <person name="Russo T."/>
            <person name="Campagnari A.A."/>
            <person name="Hujer A.M."/>
            <person name="Bonomo R.A."/>
            <person name="Gill S.R."/>
        </authorList>
    </citation>
    <scope>NUCLEOTIDE SEQUENCE [LARGE SCALE GENOMIC DNA]</scope>
    <source>
        <strain>AB307-0294</strain>
    </source>
</reference>
<protein>
    <recommendedName>
        <fullName evidence="1">GTP cyclohydrolase-2</fullName>
        <ecNumber evidence="1">3.5.4.25</ecNumber>
    </recommendedName>
    <alternativeName>
        <fullName evidence="1">GTP cyclohydrolase II</fullName>
    </alternativeName>
</protein>
<name>RIBA_ACIB3</name>
<gene>
    <name evidence="1" type="primary">ribA</name>
    <name type="ordered locus">ABBFA_000404</name>
</gene>
<feature type="chain" id="PRO_1000118424" description="GTP cyclohydrolase-2">
    <location>
        <begin position="1"/>
        <end position="200"/>
    </location>
</feature>
<feature type="active site" description="Proton acceptor" evidence="1">
    <location>
        <position position="127"/>
    </location>
</feature>
<feature type="active site" description="Nucleophile" evidence="1">
    <location>
        <position position="129"/>
    </location>
</feature>
<feature type="binding site" evidence="1">
    <location>
        <begin position="50"/>
        <end position="54"/>
    </location>
    <ligand>
        <name>GTP</name>
        <dbReference type="ChEBI" id="CHEBI:37565"/>
    </ligand>
</feature>
<feature type="binding site" evidence="1">
    <location>
        <position position="55"/>
    </location>
    <ligand>
        <name>Zn(2+)</name>
        <dbReference type="ChEBI" id="CHEBI:29105"/>
        <note>catalytic</note>
    </ligand>
</feature>
<feature type="binding site" evidence="1">
    <location>
        <position position="66"/>
    </location>
    <ligand>
        <name>Zn(2+)</name>
        <dbReference type="ChEBI" id="CHEBI:29105"/>
        <note>catalytic</note>
    </ligand>
</feature>
<feature type="binding site" evidence="1">
    <location>
        <position position="68"/>
    </location>
    <ligand>
        <name>Zn(2+)</name>
        <dbReference type="ChEBI" id="CHEBI:29105"/>
        <note>catalytic</note>
    </ligand>
</feature>
<feature type="binding site" evidence="1">
    <location>
        <position position="71"/>
    </location>
    <ligand>
        <name>GTP</name>
        <dbReference type="ChEBI" id="CHEBI:37565"/>
    </ligand>
</feature>
<feature type="binding site" evidence="1">
    <location>
        <begin position="93"/>
        <end position="95"/>
    </location>
    <ligand>
        <name>GTP</name>
        <dbReference type="ChEBI" id="CHEBI:37565"/>
    </ligand>
</feature>
<feature type="binding site" evidence="1">
    <location>
        <position position="115"/>
    </location>
    <ligand>
        <name>GTP</name>
        <dbReference type="ChEBI" id="CHEBI:37565"/>
    </ligand>
</feature>
<feature type="binding site" evidence="1">
    <location>
        <position position="150"/>
    </location>
    <ligand>
        <name>GTP</name>
        <dbReference type="ChEBI" id="CHEBI:37565"/>
    </ligand>
</feature>
<feature type="binding site" evidence="1">
    <location>
        <position position="155"/>
    </location>
    <ligand>
        <name>GTP</name>
        <dbReference type="ChEBI" id="CHEBI:37565"/>
    </ligand>
</feature>
<comment type="function">
    <text evidence="1">Catalyzes the conversion of GTP to 2,5-diamino-6-ribosylamino-4(3H)-pyrimidinone 5'-phosphate (DARP), formate and pyrophosphate.</text>
</comment>
<comment type="catalytic activity">
    <reaction evidence="1">
        <text>GTP + 4 H2O = 2,5-diamino-6-hydroxy-4-(5-phosphoribosylamino)-pyrimidine + formate + 2 phosphate + 3 H(+)</text>
        <dbReference type="Rhea" id="RHEA:23704"/>
        <dbReference type="ChEBI" id="CHEBI:15377"/>
        <dbReference type="ChEBI" id="CHEBI:15378"/>
        <dbReference type="ChEBI" id="CHEBI:15740"/>
        <dbReference type="ChEBI" id="CHEBI:37565"/>
        <dbReference type="ChEBI" id="CHEBI:43474"/>
        <dbReference type="ChEBI" id="CHEBI:58614"/>
        <dbReference type="EC" id="3.5.4.25"/>
    </reaction>
</comment>
<comment type="cofactor">
    <cofactor evidence="1">
        <name>Zn(2+)</name>
        <dbReference type="ChEBI" id="CHEBI:29105"/>
    </cofactor>
    <text evidence="1">Binds 1 zinc ion per subunit.</text>
</comment>
<comment type="pathway">
    <text evidence="1">Cofactor biosynthesis; riboflavin biosynthesis; 5-amino-6-(D-ribitylamino)uracil from GTP: step 1/4.</text>
</comment>
<comment type="similarity">
    <text evidence="1">Belongs to the GTP cyclohydrolase II family.</text>
</comment>
<evidence type="ECO:0000255" key="1">
    <source>
        <dbReference type="HAMAP-Rule" id="MF_00179"/>
    </source>
</evidence>
<organism>
    <name type="scientific">Acinetobacter baumannii (strain AB307-0294)</name>
    <dbReference type="NCBI Taxonomy" id="557600"/>
    <lineage>
        <taxon>Bacteria</taxon>
        <taxon>Pseudomonadati</taxon>
        <taxon>Pseudomonadota</taxon>
        <taxon>Gammaproteobacteria</taxon>
        <taxon>Moraxellales</taxon>
        <taxon>Moraxellaceae</taxon>
        <taxon>Acinetobacter</taxon>
        <taxon>Acinetobacter calcoaceticus/baumannii complex</taxon>
    </lineage>
</organism>